<reference key="1">
    <citation type="journal article" date="1998" name="Science">
        <title>Complete genome sequence of Treponema pallidum, the syphilis spirochete.</title>
        <authorList>
            <person name="Fraser C.M."/>
            <person name="Norris S.J."/>
            <person name="Weinstock G.M."/>
            <person name="White O."/>
            <person name="Sutton G.G."/>
            <person name="Dodson R.J."/>
            <person name="Gwinn M.L."/>
            <person name="Hickey E.K."/>
            <person name="Clayton R.A."/>
            <person name="Ketchum K.A."/>
            <person name="Sodergren E."/>
            <person name="Hardham J.M."/>
            <person name="McLeod M.P."/>
            <person name="Salzberg S.L."/>
            <person name="Peterson J.D."/>
            <person name="Khalak H.G."/>
            <person name="Richardson D.L."/>
            <person name="Howell J.K."/>
            <person name="Chidambaram M."/>
            <person name="Utterback T.R."/>
            <person name="McDonald L.A."/>
            <person name="Artiach P."/>
            <person name="Bowman C."/>
            <person name="Cotton M.D."/>
            <person name="Fujii C."/>
            <person name="Garland S.A."/>
            <person name="Hatch B."/>
            <person name="Horst K."/>
            <person name="Roberts K.M."/>
            <person name="Sandusky M."/>
            <person name="Weidman J.F."/>
            <person name="Smith H.O."/>
            <person name="Venter J.C."/>
        </authorList>
    </citation>
    <scope>NUCLEOTIDE SEQUENCE [LARGE SCALE GENOMIC DNA]</scope>
    <source>
        <strain>Nichols</strain>
    </source>
</reference>
<name>Y788_TREPA</name>
<keyword id="KW-0472">Membrane</keyword>
<keyword id="KW-1185">Reference proteome</keyword>
<keyword id="KW-0812">Transmembrane</keyword>
<keyword id="KW-1133">Transmembrane helix</keyword>
<organism>
    <name type="scientific">Treponema pallidum (strain Nichols)</name>
    <dbReference type="NCBI Taxonomy" id="243276"/>
    <lineage>
        <taxon>Bacteria</taxon>
        <taxon>Pseudomonadati</taxon>
        <taxon>Spirochaetota</taxon>
        <taxon>Spirochaetia</taxon>
        <taxon>Spirochaetales</taxon>
        <taxon>Treponemataceae</taxon>
        <taxon>Treponema</taxon>
    </lineage>
</organism>
<accession>O83767</accession>
<protein>
    <recommendedName>
        <fullName>Uncharacterized protein TP_0788</fullName>
    </recommendedName>
</protein>
<proteinExistence type="predicted"/>
<dbReference type="EMBL" id="AE000520">
    <property type="protein sequence ID" value="AAC65763.1"/>
    <property type="molecule type" value="Genomic_DNA"/>
</dbReference>
<dbReference type="PIR" id="C71280">
    <property type="entry name" value="C71280"/>
</dbReference>
<dbReference type="IntAct" id="O83767">
    <property type="interactions" value="133"/>
</dbReference>
<dbReference type="STRING" id="243276.TP_0788"/>
<dbReference type="EnsemblBacteria" id="AAC65763">
    <property type="protein sequence ID" value="AAC65763"/>
    <property type="gene ID" value="TP_0788"/>
</dbReference>
<dbReference type="KEGG" id="tpa:TP_0788"/>
<dbReference type="KEGG" id="tpw:TPANIC_0788"/>
<dbReference type="eggNOG" id="ENOG50347X1">
    <property type="taxonomic scope" value="Bacteria"/>
</dbReference>
<dbReference type="HOGENOM" id="CLU_1015418_0_0_12"/>
<dbReference type="OrthoDB" id="368436at2"/>
<dbReference type="Proteomes" id="UP000000811">
    <property type="component" value="Chromosome"/>
</dbReference>
<dbReference type="GO" id="GO:0016020">
    <property type="term" value="C:membrane"/>
    <property type="evidence" value="ECO:0007669"/>
    <property type="project" value="UniProtKB-SubCell"/>
</dbReference>
<gene>
    <name type="ordered locus">TP_0788</name>
</gene>
<feature type="chain" id="PRO_0000202326" description="Uncharacterized protein TP_0788">
    <location>
        <begin position="1"/>
        <end position="296"/>
    </location>
</feature>
<feature type="transmembrane region" description="Helical" evidence="1">
    <location>
        <begin position="7"/>
        <end position="26"/>
    </location>
</feature>
<comment type="subcellular location">
    <subcellularLocation>
        <location evidence="2">Membrane</location>
        <topology evidence="2">Single-pass membrane protein</topology>
    </subcellularLocation>
</comment>
<evidence type="ECO:0000255" key="1"/>
<evidence type="ECO:0000305" key="2"/>
<sequence length="296" mass="33638">MRVRTFCFSLVCALGASTYLLWRGWLQLSLPAGSYGVMRSRSGGYHHALIAPGRFLWRWEPLLPSNAELFAFELKKQTVSVTVQDVLPAAKEYAQLLDQHAPFDWTLALSARVALKEAFLLDTVQRERITDQNSLERYVDTTAQAALTQVSHDFIARCMADPALYERVHTQYGLATRELKRAIEKEIPHCAISEVVLSEVHIPDMVLYHTAEQAYRAFEAKRSEHLSALAQQAAKRSALENFEMQRLTKWGEFFQRYPSVIDFLNAIRQDGASTLETLKKGSTASHRAIPHEETTR</sequence>